<feature type="chain" id="PRO_0000097389" description="Regulator of nucleoside diphosphate kinase">
    <location>
        <begin position="1"/>
        <end position="136"/>
    </location>
</feature>
<comment type="function">
    <text evidence="1">May act as an anti-Gre factor.</text>
</comment>
<comment type="subunit">
    <text evidence="1">Interacts with the RNA polymerase.</text>
</comment>
<comment type="similarity">
    <text evidence="1">Belongs to the Rnk family.</text>
</comment>
<evidence type="ECO:0000255" key="1">
    <source>
        <dbReference type="HAMAP-Rule" id="MF_00954"/>
    </source>
</evidence>
<organism>
    <name type="scientific">Shigella flexneri</name>
    <dbReference type="NCBI Taxonomy" id="623"/>
    <lineage>
        <taxon>Bacteria</taxon>
        <taxon>Pseudomonadati</taxon>
        <taxon>Pseudomonadota</taxon>
        <taxon>Gammaproteobacteria</taxon>
        <taxon>Enterobacterales</taxon>
        <taxon>Enterobacteriaceae</taxon>
        <taxon>Shigella</taxon>
    </lineage>
</organism>
<sequence>MSRPTIIINDLDAERIDILLEQPAYAGLPIADALNAELDRAQMCSPEEMPHDVVTMNSRVKFRNLSDGEVRVRTLVYPAKMTDSNTQLSVMAPVGAALLGLRVGDSIHWELPGGVATHLEVLELEYQPEAAGDYLL</sequence>
<dbReference type="EMBL" id="AE005674">
    <property type="protein sequence ID" value="AAN42174.1"/>
    <property type="molecule type" value="Genomic_DNA"/>
</dbReference>
<dbReference type="EMBL" id="AE014073">
    <property type="protein sequence ID" value="AAP16045.1"/>
    <property type="molecule type" value="Genomic_DNA"/>
</dbReference>
<dbReference type="RefSeq" id="NP_706467.1">
    <property type="nucleotide sequence ID" value="NC_004337.2"/>
</dbReference>
<dbReference type="RefSeq" id="WP_000089731.1">
    <property type="nucleotide sequence ID" value="NZ_WPGW01000089.1"/>
</dbReference>
<dbReference type="SMR" id="P0AFW7"/>
<dbReference type="STRING" id="198214.SF0528"/>
<dbReference type="PaxDb" id="198214-SF0528"/>
<dbReference type="GeneID" id="1023415"/>
<dbReference type="GeneID" id="93776875"/>
<dbReference type="KEGG" id="sfl:SF0528"/>
<dbReference type="KEGG" id="sfx:S0534"/>
<dbReference type="PATRIC" id="fig|198214.7.peg.614"/>
<dbReference type="HOGENOM" id="CLU_120358_1_1_6"/>
<dbReference type="Proteomes" id="UP000001006">
    <property type="component" value="Chromosome"/>
</dbReference>
<dbReference type="Proteomes" id="UP000002673">
    <property type="component" value="Chromosome"/>
</dbReference>
<dbReference type="GO" id="GO:0003677">
    <property type="term" value="F:DNA binding"/>
    <property type="evidence" value="ECO:0007669"/>
    <property type="project" value="InterPro"/>
</dbReference>
<dbReference type="GO" id="GO:0070063">
    <property type="term" value="F:RNA polymerase binding"/>
    <property type="evidence" value="ECO:0007669"/>
    <property type="project" value="InterPro"/>
</dbReference>
<dbReference type="GO" id="GO:0006354">
    <property type="term" value="P:DNA-templated transcription elongation"/>
    <property type="evidence" value="ECO:0007669"/>
    <property type="project" value="TreeGrafter"/>
</dbReference>
<dbReference type="GO" id="GO:0032784">
    <property type="term" value="P:regulation of DNA-templated transcription elongation"/>
    <property type="evidence" value="ECO:0007669"/>
    <property type="project" value="InterPro"/>
</dbReference>
<dbReference type="FunFam" id="1.10.286.20:FF:000002">
    <property type="entry name" value="Regulator of nucleoside diphosphate kinase"/>
    <property type="match status" value="1"/>
</dbReference>
<dbReference type="FunFam" id="3.10.50.30:FF:000002">
    <property type="entry name" value="Regulator of nucleoside diphosphate kinase"/>
    <property type="match status" value="1"/>
</dbReference>
<dbReference type="Gene3D" id="1.10.286.20">
    <property type="match status" value="1"/>
</dbReference>
<dbReference type="Gene3D" id="3.10.50.30">
    <property type="entry name" value="Transcription elongation factor, GreA/GreB, C-terminal domain"/>
    <property type="match status" value="1"/>
</dbReference>
<dbReference type="HAMAP" id="MF_00954">
    <property type="entry name" value="Rnk"/>
    <property type="match status" value="1"/>
</dbReference>
<dbReference type="InterPro" id="IPR036953">
    <property type="entry name" value="GreA/GreB_C_sf"/>
</dbReference>
<dbReference type="InterPro" id="IPR028625">
    <property type="entry name" value="Rnk"/>
</dbReference>
<dbReference type="InterPro" id="IPR029462">
    <property type="entry name" value="Rnk_N"/>
</dbReference>
<dbReference type="InterPro" id="IPR001437">
    <property type="entry name" value="Tscrpt_elong_fac_GreA/B_C"/>
</dbReference>
<dbReference type="InterPro" id="IPR023459">
    <property type="entry name" value="Tscrpt_elong_fac_GreA/B_fam"/>
</dbReference>
<dbReference type="NCBIfam" id="NF004396">
    <property type="entry name" value="PRK05753.1"/>
    <property type="match status" value="1"/>
</dbReference>
<dbReference type="PANTHER" id="PTHR30437:SF5">
    <property type="entry name" value="REGULATOR OF NUCLEOSIDE DIPHOSPHATE KINASE"/>
    <property type="match status" value="1"/>
</dbReference>
<dbReference type="PANTHER" id="PTHR30437">
    <property type="entry name" value="TRANSCRIPTION ELONGATION FACTOR GREA"/>
    <property type="match status" value="1"/>
</dbReference>
<dbReference type="Pfam" id="PF01272">
    <property type="entry name" value="GreA_GreB"/>
    <property type="match status" value="1"/>
</dbReference>
<dbReference type="Pfam" id="PF14760">
    <property type="entry name" value="Rnk_N"/>
    <property type="match status" value="1"/>
</dbReference>
<dbReference type="SUPFAM" id="SSF54534">
    <property type="entry name" value="FKBP-like"/>
    <property type="match status" value="1"/>
</dbReference>
<accession>P0AFW7</accession>
<accession>P40679</accession>
<name>RNK_SHIFL</name>
<keyword id="KW-1185">Reference proteome</keyword>
<protein>
    <recommendedName>
        <fullName evidence="1">Regulator of nucleoside diphosphate kinase</fullName>
    </recommendedName>
</protein>
<reference key="1">
    <citation type="journal article" date="2002" name="Nucleic Acids Res.">
        <title>Genome sequence of Shigella flexneri 2a: insights into pathogenicity through comparison with genomes of Escherichia coli K12 and O157.</title>
        <authorList>
            <person name="Jin Q."/>
            <person name="Yuan Z."/>
            <person name="Xu J."/>
            <person name="Wang Y."/>
            <person name="Shen Y."/>
            <person name="Lu W."/>
            <person name="Wang J."/>
            <person name="Liu H."/>
            <person name="Yang J."/>
            <person name="Yang F."/>
            <person name="Zhang X."/>
            <person name="Zhang J."/>
            <person name="Yang G."/>
            <person name="Wu H."/>
            <person name="Qu D."/>
            <person name="Dong J."/>
            <person name="Sun L."/>
            <person name="Xue Y."/>
            <person name="Zhao A."/>
            <person name="Gao Y."/>
            <person name="Zhu J."/>
            <person name="Kan B."/>
            <person name="Ding K."/>
            <person name="Chen S."/>
            <person name="Cheng H."/>
            <person name="Yao Z."/>
            <person name="He B."/>
            <person name="Chen R."/>
            <person name="Ma D."/>
            <person name="Qiang B."/>
            <person name="Wen Y."/>
            <person name="Hou Y."/>
            <person name="Yu J."/>
        </authorList>
    </citation>
    <scope>NUCLEOTIDE SEQUENCE [LARGE SCALE GENOMIC DNA]</scope>
    <source>
        <strain>301 / Serotype 2a</strain>
    </source>
</reference>
<reference key="2">
    <citation type="journal article" date="2003" name="Infect. Immun.">
        <title>Complete genome sequence and comparative genomics of Shigella flexneri serotype 2a strain 2457T.</title>
        <authorList>
            <person name="Wei J."/>
            <person name="Goldberg M.B."/>
            <person name="Burland V."/>
            <person name="Venkatesan M.M."/>
            <person name="Deng W."/>
            <person name="Fournier G."/>
            <person name="Mayhew G.F."/>
            <person name="Plunkett G. III"/>
            <person name="Rose D.J."/>
            <person name="Darling A."/>
            <person name="Mau B."/>
            <person name="Perna N.T."/>
            <person name="Payne S.M."/>
            <person name="Runyen-Janecky L.J."/>
            <person name="Zhou S."/>
            <person name="Schwartz D.C."/>
            <person name="Blattner F.R."/>
        </authorList>
    </citation>
    <scope>NUCLEOTIDE SEQUENCE [LARGE SCALE GENOMIC DNA]</scope>
    <source>
        <strain>ATCC 700930 / 2457T / Serotype 2a</strain>
    </source>
</reference>
<gene>
    <name evidence="1" type="primary">rnk</name>
    <name type="ordered locus">SF0528</name>
    <name type="ordered locus">S0534</name>
</gene>
<proteinExistence type="inferred from homology"/>